<feature type="chain" id="PRO_0000272752" description="Large ribosomal subunit protein uL23">
    <location>
        <begin position="1"/>
        <end position="94"/>
    </location>
</feature>
<comment type="function">
    <text evidence="1">One of the early assembly proteins it binds 23S rRNA. One of the proteins that surrounds the polypeptide exit tunnel on the outside of the ribosome. Forms the main docking site for trigger factor binding to the ribosome.</text>
</comment>
<comment type="subunit">
    <text evidence="1">Part of the 50S ribosomal subunit. Contacts protein L29, and trigger factor when it is bound to the ribosome.</text>
</comment>
<comment type="similarity">
    <text evidence="1">Belongs to the universal ribosomal protein uL23 family.</text>
</comment>
<sequence>MNLYDVIKKPLITEKTTIEKDSKNVVSFEVDRDANKIEIKEAVEKLFKVEVAEVNTVNVAGKVKRFGRHYGKRSNWKKAYVTLKEGSSVDFFEI</sequence>
<dbReference type="EMBL" id="AE017180">
    <property type="protein sequence ID" value="AAR36248.1"/>
    <property type="molecule type" value="Genomic_DNA"/>
</dbReference>
<dbReference type="RefSeq" id="NP_953898.1">
    <property type="nucleotide sequence ID" value="NC_002939.5"/>
</dbReference>
<dbReference type="RefSeq" id="WP_010943484.1">
    <property type="nucleotide sequence ID" value="NC_002939.5"/>
</dbReference>
<dbReference type="SMR" id="Q748Z1"/>
<dbReference type="FunCoup" id="Q748Z1">
    <property type="interactions" value="568"/>
</dbReference>
<dbReference type="STRING" id="243231.GSU2855"/>
<dbReference type="EnsemblBacteria" id="AAR36248">
    <property type="protein sequence ID" value="AAR36248"/>
    <property type="gene ID" value="GSU2855"/>
</dbReference>
<dbReference type="KEGG" id="gsu:GSU2855"/>
<dbReference type="PATRIC" id="fig|243231.5.peg.2881"/>
<dbReference type="eggNOG" id="COG0089">
    <property type="taxonomic scope" value="Bacteria"/>
</dbReference>
<dbReference type="HOGENOM" id="CLU_037562_3_1_7"/>
<dbReference type="InParanoid" id="Q748Z1"/>
<dbReference type="OrthoDB" id="9793353at2"/>
<dbReference type="Proteomes" id="UP000000577">
    <property type="component" value="Chromosome"/>
</dbReference>
<dbReference type="GO" id="GO:0022625">
    <property type="term" value="C:cytosolic large ribosomal subunit"/>
    <property type="evidence" value="ECO:0000318"/>
    <property type="project" value="GO_Central"/>
</dbReference>
<dbReference type="GO" id="GO:0019843">
    <property type="term" value="F:rRNA binding"/>
    <property type="evidence" value="ECO:0007669"/>
    <property type="project" value="UniProtKB-UniRule"/>
</dbReference>
<dbReference type="GO" id="GO:0003735">
    <property type="term" value="F:structural constituent of ribosome"/>
    <property type="evidence" value="ECO:0000318"/>
    <property type="project" value="GO_Central"/>
</dbReference>
<dbReference type="GO" id="GO:0006412">
    <property type="term" value="P:translation"/>
    <property type="evidence" value="ECO:0007669"/>
    <property type="project" value="UniProtKB-UniRule"/>
</dbReference>
<dbReference type="FunFam" id="3.30.70.330:FF:000001">
    <property type="entry name" value="50S ribosomal protein L23"/>
    <property type="match status" value="1"/>
</dbReference>
<dbReference type="Gene3D" id="3.30.70.330">
    <property type="match status" value="1"/>
</dbReference>
<dbReference type="HAMAP" id="MF_01369_B">
    <property type="entry name" value="Ribosomal_uL23_B"/>
    <property type="match status" value="1"/>
</dbReference>
<dbReference type="InterPro" id="IPR012677">
    <property type="entry name" value="Nucleotide-bd_a/b_plait_sf"/>
</dbReference>
<dbReference type="InterPro" id="IPR013025">
    <property type="entry name" value="Ribosomal_uL23-like"/>
</dbReference>
<dbReference type="InterPro" id="IPR012678">
    <property type="entry name" value="Ribosomal_uL23/eL15/eS24_sf"/>
</dbReference>
<dbReference type="InterPro" id="IPR001014">
    <property type="entry name" value="Ribosomal_uL23_CS"/>
</dbReference>
<dbReference type="NCBIfam" id="NF004359">
    <property type="entry name" value="PRK05738.1-3"/>
    <property type="match status" value="1"/>
</dbReference>
<dbReference type="NCBIfam" id="NF004363">
    <property type="entry name" value="PRK05738.2-4"/>
    <property type="match status" value="1"/>
</dbReference>
<dbReference type="NCBIfam" id="NF004366">
    <property type="entry name" value="PRK05738.3-2"/>
    <property type="match status" value="1"/>
</dbReference>
<dbReference type="PANTHER" id="PTHR11620">
    <property type="entry name" value="60S RIBOSOMAL PROTEIN L23A"/>
    <property type="match status" value="1"/>
</dbReference>
<dbReference type="Pfam" id="PF00276">
    <property type="entry name" value="Ribosomal_L23"/>
    <property type="match status" value="1"/>
</dbReference>
<dbReference type="SUPFAM" id="SSF54189">
    <property type="entry name" value="Ribosomal proteins S24e, L23 and L15e"/>
    <property type="match status" value="1"/>
</dbReference>
<dbReference type="PROSITE" id="PS00050">
    <property type="entry name" value="RIBOSOMAL_L23"/>
    <property type="match status" value="1"/>
</dbReference>
<evidence type="ECO:0000255" key="1">
    <source>
        <dbReference type="HAMAP-Rule" id="MF_01369"/>
    </source>
</evidence>
<evidence type="ECO:0000305" key="2"/>
<reference key="1">
    <citation type="journal article" date="2003" name="Science">
        <title>Genome of Geobacter sulfurreducens: metal reduction in subsurface environments.</title>
        <authorList>
            <person name="Methe B.A."/>
            <person name="Nelson K.E."/>
            <person name="Eisen J.A."/>
            <person name="Paulsen I.T."/>
            <person name="Nelson W.C."/>
            <person name="Heidelberg J.F."/>
            <person name="Wu D."/>
            <person name="Wu M."/>
            <person name="Ward N.L."/>
            <person name="Beanan M.J."/>
            <person name="Dodson R.J."/>
            <person name="Madupu R."/>
            <person name="Brinkac L.M."/>
            <person name="Daugherty S.C."/>
            <person name="DeBoy R.T."/>
            <person name="Durkin A.S."/>
            <person name="Gwinn M.L."/>
            <person name="Kolonay J.F."/>
            <person name="Sullivan S.A."/>
            <person name="Haft D.H."/>
            <person name="Selengut J."/>
            <person name="Davidsen T.M."/>
            <person name="Zafar N."/>
            <person name="White O."/>
            <person name="Tran B."/>
            <person name="Romero C."/>
            <person name="Forberger H.A."/>
            <person name="Weidman J.F."/>
            <person name="Khouri H.M."/>
            <person name="Feldblyum T.V."/>
            <person name="Utterback T.R."/>
            <person name="Van Aken S.E."/>
            <person name="Lovley D.R."/>
            <person name="Fraser C.M."/>
        </authorList>
    </citation>
    <scope>NUCLEOTIDE SEQUENCE [LARGE SCALE GENOMIC DNA]</scope>
    <source>
        <strain>ATCC 51573 / DSM 12127 / PCA</strain>
    </source>
</reference>
<organism>
    <name type="scientific">Geobacter sulfurreducens (strain ATCC 51573 / DSM 12127 / PCA)</name>
    <dbReference type="NCBI Taxonomy" id="243231"/>
    <lineage>
        <taxon>Bacteria</taxon>
        <taxon>Pseudomonadati</taxon>
        <taxon>Thermodesulfobacteriota</taxon>
        <taxon>Desulfuromonadia</taxon>
        <taxon>Geobacterales</taxon>
        <taxon>Geobacteraceae</taxon>
        <taxon>Geobacter</taxon>
    </lineage>
</organism>
<protein>
    <recommendedName>
        <fullName evidence="1">Large ribosomal subunit protein uL23</fullName>
    </recommendedName>
    <alternativeName>
        <fullName evidence="2">50S ribosomal protein L23</fullName>
    </alternativeName>
</protein>
<name>RL23_GEOSL</name>
<keyword id="KW-1185">Reference proteome</keyword>
<keyword id="KW-0687">Ribonucleoprotein</keyword>
<keyword id="KW-0689">Ribosomal protein</keyword>
<keyword id="KW-0694">RNA-binding</keyword>
<keyword id="KW-0699">rRNA-binding</keyword>
<proteinExistence type="inferred from homology"/>
<gene>
    <name evidence="1" type="primary">rplW</name>
    <name type="ordered locus">GSU2855</name>
</gene>
<accession>Q748Z1</accession>